<sequence length="500" mass="54677">MPAFSLMIQGTTSDAGKSTLVTALCRLFYRRGISVAPFKPQNMALNSAVTKDGNEIGRAQAVQAYAAGLEPQVDMNPILLKPNTDTGAQVIIQGKAVGNMNAVGYHEYKSIAKVAALDSYQRLANQYQAVLIEGAGSPAEINLRARDIANMGFAESIDCPVIIIADIDKGGVFAHLVGTLDLLSPSEQDRVIGFVINRFRGDISLLQSGLDWLEERTGKPVLGVLPFLKGFHLESEDAVAKSPIKADSKAKLNIVIPIMPRTSNHTDWDALRLHPEVQVTLVGANETIPPADLVILPGSKSVQSDLAYLRQEGWEDYLNKHLRYGGKVIGICGGYQMLGEQLLDPLGLENQHANTRSTGFGFIPMETVLKEEKQLKQRQGQLAFAANAQVTGYEIHSGVSRFTDETQIAHFALLDDGKNKENSEKEGYISPDGQIIGTYLHGVFDHPDALQALLNWAGVDQAAAFDYDQFRDKEIDRLADSTEQNMNIDALIEQCQNFQQ</sequence>
<reference key="1">
    <citation type="submission" date="2007-06" db="EMBL/GenBank/DDBJ databases">
        <title>Complete sequence of Marinomonas sp. MWYL1.</title>
        <authorList>
            <consortium name="US DOE Joint Genome Institute"/>
            <person name="Copeland A."/>
            <person name="Lucas S."/>
            <person name="Lapidus A."/>
            <person name="Barry K."/>
            <person name="Glavina del Rio T."/>
            <person name="Dalin E."/>
            <person name="Tice H."/>
            <person name="Pitluck S."/>
            <person name="Kiss H."/>
            <person name="Brettin T."/>
            <person name="Bruce D."/>
            <person name="Detter J.C."/>
            <person name="Han C."/>
            <person name="Schmutz J."/>
            <person name="Larimer F."/>
            <person name="Land M."/>
            <person name="Hauser L."/>
            <person name="Kyrpides N."/>
            <person name="Kim E."/>
            <person name="Johnston A.W.B."/>
            <person name="Todd J.D."/>
            <person name="Rogers R."/>
            <person name="Wexler M."/>
            <person name="Bond P.L."/>
            <person name="Li Y."/>
            <person name="Richardson P."/>
        </authorList>
    </citation>
    <scope>NUCLEOTIDE SEQUENCE [LARGE SCALE GENOMIC DNA]</scope>
    <source>
        <strain>MWYL1</strain>
    </source>
</reference>
<keyword id="KW-0169">Cobalamin biosynthesis</keyword>
<keyword id="KW-0315">Glutamine amidotransferase</keyword>
<gene>
    <name evidence="1" type="primary">cobQ</name>
    <name type="ordered locus">Mmwyl1_3678</name>
</gene>
<evidence type="ECO:0000255" key="1">
    <source>
        <dbReference type="HAMAP-Rule" id="MF_00028"/>
    </source>
</evidence>
<comment type="function">
    <text evidence="1">Catalyzes amidations at positions B, D, E, and G on adenosylcobyrinic A,C-diamide. NH(2) groups are provided by glutamine, and one molecule of ATP is hydrogenolyzed for each amidation.</text>
</comment>
<comment type="pathway">
    <text evidence="1">Cofactor biosynthesis; adenosylcobalamin biosynthesis.</text>
</comment>
<comment type="similarity">
    <text evidence="1">Belongs to the CobB/CobQ family. CobQ subfamily.</text>
</comment>
<feature type="chain" id="PRO_1000074400" description="Cobyric acid synthase">
    <location>
        <begin position="1"/>
        <end position="500"/>
    </location>
</feature>
<feature type="domain" description="GATase cobBQ-type" evidence="1">
    <location>
        <begin position="251"/>
        <end position="449"/>
    </location>
</feature>
<feature type="active site" description="Nucleophile" evidence="1">
    <location>
        <position position="332"/>
    </location>
</feature>
<feature type="active site" evidence="1">
    <location>
        <position position="441"/>
    </location>
</feature>
<protein>
    <recommendedName>
        <fullName evidence="1">Cobyric acid synthase</fullName>
    </recommendedName>
</protein>
<proteinExistence type="inferred from homology"/>
<dbReference type="EMBL" id="CP000749">
    <property type="protein sequence ID" value="ABR72579.1"/>
    <property type="molecule type" value="Genomic_DNA"/>
</dbReference>
<dbReference type="SMR" id="A6W1K0"/>
<dbReference type="STRING" id="400668.Mmwyl1_3678"/>
<dbReference type="KEGG" id="mmw:Mmwyl1_3678"/>
<dbReference type="eggNOG" id="COG1492">
    <property type="taxonomic scope" value="Bacteria"/>
</dbReference>
<dbReference type="HOGENOM" id="CLU_019250_2_2_6"/>
<dbReference type="OrthoDB" id="9808302at2"/>
<dbReference type="UniPathway" id="UPA00148"/>
<dbReference type="GO" id="GO:0015420">
    <property type="term" value="F:ABC-type vitamin B12 transporter activity"/>
    <property type="evidence" value="ECO:0007669"/>
    <property type="project" value="UniProtKB-UniRule"/>
</dbReference>
<dbReference type="GO" id="GO:0003824">
    <property type="term" value="F:catalytic activity"/>
    <property type="evidence" value="ECO:0007669"/>
    <property type="project" value="InterPro"/>
</dbReference>
<dbReference type="GO" id="GO:0009236">
    <property type="term" value="P:cobalamin biosynthetic process"/>
    <property type="evidence" value="ECO:0007669"/>
    <property type="project" value="UniProtKB-UniRule"/>
</dbReference>
<dbReference type="CDD" id="cd05389">
    <property type="entry name" value="CobQ_N"/>
    <property type="match status" value="1"/>
</dbReference>
<dbReference type="CDD" id="cd01750">
    <property type="entry name" value="GATase1_CobQ"/>
    <property type="match status" value="1"/>
</dbReference>
<dbReference type="Gene3D" id="3.40.50.880">
    <property type="match status" value="1"/>
</dbReference>
<dbReference type="Gene3D" id="3.40.50.300">
    <property type="entry name" value="P-loop containing nucleotide triphosphate hydrolases"/>
    <property type="match status" value="1"/>
</dbReference>
<dbReference type="HAMAP" id="MF_00028">
    <property type="entry name" value="CobQ"/>
    <property type="match status" value="1"/>
</dbReference>
<dbReference type="InterPro" id="IPR029062">
    <property type="entry name" value="Class_I_gatase-like"/>
</dbReference>
<dbReference type="InterPro" id="IPR002586">
    <property type="entry name" value="CobQ/CobB/MinD/ParA_Nub-bd_dom"/>
</dbReference>
<dbReference type="InterPro" id="IPR033949">
    <property type="entry name" value="CobQ_GATase1"/>
</dbReference>
<dbReference type="InterPro" id="IPR047045">
    <property type="entry name" value="CobQ_N"/>
</dbReference>
<dbReference type="InterPro" id="IPR004459">
    <property type="entry name" value="CobQ_synth"/>
</dbReference>
<dbReference type="InterPro" id="IPR011698">
    <property type="entry name" value="GATase_3"/>
</dbReference>
<dbReference type="InterPro" id="IPR027417">
    <property type="entry name" value="P-loop_NTPase"/>
</dbReference>
<dbReference type="NCBIfam" id="TIGR00313">
    <property type="entry name" value="cobQ"/>
    <property type="match status" value="1"/>
</dbReference>
<dbReference type="NCBIfam" id="NF001989">
    <property type="entry name" value="PRK00784.1"/>
    <property type="match status" value="1"/>
</dbReference>
<dbReference type="PANTHER" id="PTHR21343:SF1">
    <property type="entry name" value="COBYRIC ACID SYNTHASE"/>
    <property type="match status" value="1"/>
</dbReference>
<dbReference type="PANTHER" id="PTHR21343">
    <property type="entry name" value="DETHIOBIOTIN SYNTHETASE"/>
    <property type="match status" value="1"/>
</dbReference>
<dbReference type="Pfam" id="PF01656">
    <property type="entry name" value="CbiA"/>
    <property type="match status" value="1"/>
</dbReference>
<dbReference type="Pfam" id="PF07685">
    <property type="entry name" value="GATase_3"/>
    <property type="match status" value="1"/>
</dbReference>
<dbReference type="SUPFAM" id="SSF52317">
    <property type="entry name" value="Class I glutamine amidotransferase-like"/>
    <property type="match status" value="1"/>
</dbReference>
<dbReference type="SUPFAM" id="SSF52540">
    <property type="entry name" value="P-loop containing nucleoside triphosphate hydrolases"/>
    <property type="match status" value="1"/>
</dbReference>
<dbReference type="PROSITE" id="PS51274">
    <property type="entry name" value="GATASE_COBBQ"/>
    <property type="match status" value="1"/>
</dbReference>
<organism>
    <name type="scientific">Marinomonas sp. (strain MWYL1)</name>
    <dbReference type="NCBI Taxonomy" id="400668"/>
    <lineage>
        <taxon>Bacteria</taxon>
        <taxon>Pseudomonadati</taxon>
        <taxon>Pseudomonadota</taxon>
        <taxon>Gammaproteobacteria</taxon>
        <taxon>Oceanospirillales</taxon>
        <taxon>Oceanospirillaceae</taxon>
        <taxon>Marinomonas</taxon>
    </lineage>
</organism>
<accession>A6W1K0</accession>
<name>COBQ_MARMS</name>